<keyword id="KW-0143">Chaperone</keyword>
<keyword id="KW-0963">Cytoplasm</keyword>
<accession>A4WM72</accession>
<gene>
    <name evidence="1" type="primary">pfdB</name>
    <name type="ordered locus">Pars_1942</name>
</gene>
<proteinExistence type="inferred from homology"/>
<comment type="function">
    <text evidence="1">Molecular chaperone capable of stabilizing a range of proteins. Seems to fulfill an ATP-independent, HSP70-like function in archaeal de novo protein folding.</text>
</comment>
<comment type="subunit">
    <text evidence="1">Heterohexamer of two alpha and four beta subunits.</text>
</comment>
<comment type="subcellular location">
    <subcellularLocation>
        <location evidence="1">Cytoplasm</location>
    </subcellularLocation>
</comment>
<comment type="similarity">
    <text evidence="1">Belongs to the prefoldin subunit beta family.</text>
</comment>
<protein>
    <recommendedName>
        <fullName evidence="1">Prefoldin subunit beta</fullName>
    </recommendedName>
    <alternativeName>
        <fullName evidence="1">GimC subunit beta</fullName>
    </alternativeName>
</protein>
<reference key="1">
    <citation type="submission" date="2007-04" db="EMBL/GenBank/DDBJ databases">
        <title>Complete sequence of Pyrobaculum arsenaticum DSM 13514.</title>
        <authorList>
            <consortium name="US DOE Joint Genome Institute"/>
            <person name="Copeland A."/>
            <person name="Lucas S."/>
            <person name="Lapidus A."/>
            <person name="Barry K."/>
            <person name="Glavina del Rio T."/>
            <person name="Dalin E."/>
            <person name="Tice H."/>
            <person name="Pitluck S."/>
            <person name="Chain P."/>
            <person name="Malfatti S."/>
            <person name="Shin M."/>
            <person name="Vergez L."/>
            <person name="Schmutz J."/>
            <person name="Larimer F."/>
            <person name="Land M."/>
            <person name="Hauser L."/>
            <person name="Kyrpides N."/>
            <person name="Mikhailova N."/>
            <person name="Cozen A.E."/>
            <person name="Fitz-Gibbon S.T."/>
            <person name="House C.H."/>
            <person name="Saltikov C."/>
            <person name="Lowe T.M."/>
            <person name="Richardson P."/>
        </authorList>
    </citation>
    <scope>NUCLEOTIDE SEQUENCE [LARGE SCALE GENOMIC DNA]</scope>
    <source>
        <strain>ATCC 700994 / DSM 13514 / JCM 11321 / PZ6</strain>
    </source>
</reference>
<sequence>MAQIPPSLQDMVNRFNQAQAQLQSVLLRKQQYEAELKEVDKAISEIEKLSPDAKIFKNVGNFLVPQTRDAALQELKERKELLELHVKTLSRQETMLREQLDKLRDEINKELARLKGGEAAKGGG</sequence>
<name>PFDB_PYRAR</name>
<organism>
    <name type="scientific">Pyrobaculum arsenaticum (strain DSM 13514 / JCM 11321 / PZ6)</name>
    <dbReference type="NCBI Taxonomy" id="340102"/>
    <lineage>
        <taxon>Archaea</taxon>
        <taxon>Thermoproteota</taxon>
        <taxon>Thermoprotei</taxon>
        <taxon>Thermoproteales</taxon>
        <taxon>Thermoproteaceae</taxon>
        <taxon>Pyrobaculum</taxon>
    </lineage>
</organism>
<evidence type="ECO:0000255" key="1">
    <source>
        <dbReference type="HAMAP-Rule" id="MF_00307"/>
    </source>
</evidence>
<feature type="chain" id="PRO_0000300776" description="Prefoldin subunit beta">
    <location>
        <begin position="1"/>
        <end position="124"/>
    </location>
</feature>
<dbReference type="EMBL" id="CP000660">
    <property type="protein sequence ID" value="ABP51489.1"/>
    <property type="molecule type" value="Genomic_DNA"/>
</dbReference>
<dbReference type="SMR" id="A4WM72"/>
<dbReference type="STRING" id="340102.Pars_1942"/>
<dbReference type="KEGG" id="pas:Pars_1942"/>
<dbReference type="HOGENOM" id="CLU_131909_2_1_2"/>
<dbReference type="OrthoDB" id="27242at2157"/>
<dbReference type="PhylomeDB" id="A4WM72"/>
<dbReference type="Proteomes" id="UP000001567">
    <property type="component" value="Chromosome"/>
</dbReference>
<dbReference type="GO" id="GO:0005737">
    <property type="term" value="C:cytoplasm"/>
    <property type="evidence" value="ECO:0007669"/>
    <property type="project" value="UniProtKB-SubCell"/>
</dbReference>
<dbReference type="GO" id="GO:0016272">
    <property type="term" value="C:prefoldin complex"/>
    <property type="evidence" value="ECO:0007669"/>
    <property type="project" value="UniProtKB-UniRule"/>
</dbReference>
<dbReference type="GO" id="GO:0051087">
    <property type="term" value="F:protein-folding chaperone binding"/>
    <property type="evidence" value="ECO:0007669"/>
    <property type="project" value="TreeGrafter"/>
</dbReference>
<dbReference type="GO" id="GO:0051082">
    <property type="term" value="F:unfolded protein binding"/>
    <property type="evidence" value="ECO:0007669"/>
    <property type="project" value="UniProtKB-UniRule"/>
</dbReference>
<dbReference type="GO" id="GO:0051131">
    <property type="term" value="P:chaperone-mediated protein complex assembly"/>
    <property type="evidence" value="ECO:0007669"/>
    <property type="project" value="TreeGrafter"/>
</dbReference>
<dbReference type="GO" id="GO:0006457">
    <property type="term" value="P:protein folding"/>
    <property type="evidence" value="ECO:0007669"/>
    <property type="project" value="UniProtKB-UniRule"/>
</dbReference>
<dbReference type="CDD" id="cd23162">
    <property type="entry name" value="Prefoldin_beta_GimC"/>
    <property type="match status" value="1"/>
</dbReference>
<dbReference type="FunFam" id="1.10.287.370:FF:000013">
    <property type="entry name" value="Prefoldin subunit beta"/>
    <property type="match status" value="1"/>
</dbReference>
<dbReference type="Gene3D" id="1.10.287.370">
    <property type="match status" value="1"/>
</dbReference>
<dbReference type="HAMAP" id="MF_00307">
    <property type="entry name" value="PfdB"/>
    <property type="match status" value="1"/>
</dbReference>
<dbReference type="InterPro" id="IPR002777">
    <property type="entry name" value="PFD_beta-like"/>
</dbReference>
<dbReference type="InterPro" id="IPR012713">
    <property type="entry name" value="PfdB"/>
</dbReference>
<dbReference type="InterPro" id="IPR009053">
    <property type="entry name" value="Prefoldin"/>
</dbReference>
<dbReference type="NCBIfam" id="TIGR02338">
    <property type="entry name" value="gimC_beta"/>
    <property type="match status" value="1"/>
</dbReference>
<dbReference type="PANTHER" id="PTHR21431">
    <property type="entry name" value="PREFOLDIN SUBUNIT 6"/>
    <property type="match status" value="1"/>
</dbReference>
<dbReference type="PANTHER" id="PTHR21431:SF0">
    <property type="entry name" value="PREFOLDIN SUBUNIT 6"/>
    <property type="match status" value="1"/>
</dbReference>
<dbReference type="Pfam" id="PF01920">
    <property type="entry name" value="Prefoldin_2"/>
    <property type="match status" value="1"/>
</dbReference>
<dbReference type="SUPFAM" id="SSF46579">
    <property type="entry name" value="Prefoldin"/>
    <property type="match status" value="1"/>
</dbReference>